<proteinExistence type="inferred from homology"/>
<reference key="1">
    <citation type="journal article" date="2010" name="Genome Biol. Evol.">
        <title>Continuing evolution of Burkholderia mallei through genome reduction and large-scale rearrangements.</title>
        <authorList>
            <person name="Losada L."/>
            <person name="Ronning C.M."/>
            <person name="DeShazer D."/>
            <person name="Woods D."/>
            <person name="Fedorova N."/>
            <person name="Kim H.S."/>
            <person name="Shabalina S.A."/>
            <person name="Pearson T.R."/>
            <person name="Brinkac L."/>
            <person name="Tan P."/>
            <person name="Nandi T."/>
            <person name="Crabtree J."/>
            <person name="Badger J."/>
            <person name="Beckstrom-Sternberg S."/>
            <person name="Saqib M."/>
            <person name="Schutzer S.E."/>
            <person name="Keim P."/>
            <person name="Nierman W.C."/>
        </authorList>
    </citation>
    <scope>NUCLEOTIDE SEQUENCE [LARGE SCALE GENOMIC DNA]</scope>
    <source>
        <strain>1710b</strain>
    </source>
</reference>
<dbReference type="EC" id="3.4.21.92" evidence="1"/>
<dbReference type="EMBL" id="CP000124">
    <property type="protein sequence ID" value="ABA47706.1"/>
    <property type="molecule type" value="Genomic_DNA"/>
</dbReference>
<dbReference type="SMR" id="Q3JRC9"/>
<dbReference type="MEROPS" id="S14.001"/>
<dbReference type="EnsemblBacteria" id="ABA47706">
    <property type="protein sequence ID" value="ABA47706"/>
    <property type="gene ID" value="BURPS1710b_2481"/>
</dbReference>
<dbReference type="KEGG" id="bpm:BURPS1710b_2481"/>
<dbReference type="HOGENOM" id="CLU_058707_3_2_4"/>
<dbReference type="Proteomes" id="UP000002700">
    <property type="component" value="Chromosome I"/>
</dbReference>
<dbReference type="GO" id="GO:0005737">
    <property type="term" value="C:cytoplasm"/>
    <property type="evidence" value="ECO:0007669"/>
    <property type="project" value="UniProtKB-SubCell"/>
</dbReference>
<dbReference type="GO" id="GO:0009368">
    <property type="term" value="C:endopeptidase Clp complex"/>
    <property type="evidence" value="ECO:0007669"/>
    <property type="project" value="TreeGrafter"/>
</dbReference>
<dbReference type="GO" id="GO:0004176">
    <property type="term" value="F:ATP-dependent peptidase activity"/>
    <property type="evidence" value="ECO:0007669"/>
    <property type="project" value="InterPro"/>
</dbReference>
<dbReference type="GO" id="GO:0051117">
    <property type="term" value="F:ATPase binding"/>
    <property type="evidence" value="ECO:0007669"/>
    <property type="project" value="TreeGrafter"/>
</dbReference>
<dbReference type="GO" id="GO:0004252">
    <property type="term" value="F:serine-type endopeptidase activity"/>
    <property type="evidence" value="ECO:0007669"/>
    <property type="project" value="UniProtKB-UniRule"/>
</dbReference>
<dbReference type="GO" id="GO:0006515">
    <property type="term" value="P:protein quality control for misfolded or incompletely synthesized proteins"/>
    <property type="evidence" value="ECO:0007669"/>
    <property type="project" value="TreeGrafter"/>
</dbReference>
<dbReference type="CDD" id="cd07017">
    <property type="entry name" value="S14_ClpP_2"/>
    <property type="match status" value="1"/>
</dbReference>
<dbReference type="FunFam" id="3.90.226.10:FF:000001">
    <property type="entry name" value="ATP-dependent Clp protease proteolytic subunit"/>
    <property type="match status" value="1"/>
</dbReference>
<dbReference type="Gene3D" id="3.90.226.10">
    <property type="entry name" value="2-enoyl-CoA Hydratase, Chain A, domain 1"/>
    <property type="match status" value="1"/>
</dbReference>
<dbReference type="HAMAP" id="MF_00444">
    <property type="entry name" value="ClpP"/>
    <property type="match status" value="1"/>
</dbReference>
<dbReference type="InterPro" id="IPR001907">
    <property type="entry name" value="ClpP"/>
</dbReference>
<dbReference type="InterPro" id="IPR029045">
    <property type="entry name" value="ClpP/crotonase-like_dom_sf"/>
</dbReference>
<dbReference type="InterPro" id="IPR023562">
    <property type="entry name" value="ClpP/TepA"/>
</dbReference>
<dbReference type="InterPro" id="IPR033135">
    <property type="entry name" value="ClpP_His_AS"/>
</dbReference>
<dbReference type="InterPro" id="IPR018215">
    <property type="entry name" value="ClpP_Ser_AS"/>
</dbReference>
<dbReference type="NCBIfam" id="TIGR00493">
    <property type="entry name" value="clpP"/>
    <property type="match status" value="1"/>
</dbReference>
<dbReference type="NCBIfam" id="NF001368">
    <property type="entry name" value="PRK00277.1"/>
    <property type="match status" value="1"/>
</dbReference>
<dbReference type="NCBIfam" id="NF009205">
    <property type="entry name" value="PRK12553.1"/>
    <property type="match status" value="1"/>
</dbReference>
<dbReference type="PANTHER" id="PTHR10381">
    <property type="entry name" value="ATP-DEPENDENT CLP PROTEASE PROTEOLYTIC SUBUNIT"/>
    <property type="match status" value="1"/>
</dbReference>
<dbReference type="PANTHER" id="PTHR10381:SF70">
    <property type="entry name" value="ATP-DEPENDENT CLP PROTEASE PROTEOLYTIC SUBUNIT"/>
    <property type="match status" value="1"/>
</dbReference>
<dbReference type="Pfam" id="PF00574">
    <property type="entry name" value="CLP_protease"/>
    <property type="match status" value="1"/>
</dbReference>
<dbReference type="PRINTS" id="PR00127">
    <property type="entry name" value="CLPPROTEASEP"/>
</dbReference>
<dbReference type="SUPFAM" id="SSF52096">
    <property type="entry name" value="ClpP/crotonase"/>
    <property type="match status" value="1"/>
</dbReference>
<dbReference type="PROSITE" id="PS00382">
    <property type="entry name" value="CLP_PROTEASE_HIS"/>
    <property type="match status" value="1"/>
</dbReference>
<dbReference type="PROSITE" id="PS00381">
    <property type="entry name" value="CLP_PROTEASE_SER"/>
    <property type="match status" value="1"/>
</dbReference>
<name>CLPP_BURP1</name>
<accession>Q3JRC9</accession>
<organism>
    <name type="scientific">Burkholderia pseudomallei (strain 1710b)</name>
    <dbReference type="NCBI Taxonomy" id="320372"/>
    <lineage>
        <taxon>Bacteria</taxon>
        <taxon>Pseudomonadati</taxon>
        <taxon>Pseudomonadota</taxon>
        <taxon>Betaproteobacteria</taxon>
        <taxon>Burkholderiales</taxon>
        <taxon>Burkholderiaceae</taxon>
        <taxon>Burkholderia</taxon>
        <taxon>pseudomallei group</taxon>
    </lineage>
</organism>
<evidence type="ECO:0000255" key="1">
    <source>
        <dbReference type="HAMAP-Rule" id="MF_00444"/>
    </source>
</evidence>
<sequence>MASQAPRDFEAQALGLVPIVVETSGRGERSYDIYSRLLKERIVFMVGEVNDQTANLVVAQLLFLESENPDKDISLYINSPGGSVSAGMAIYDTMQFVKPDVSTLCMGLAASMGAFLLASGAKGKRYALPNARVMIHQPLGGARGQASDIEIQAREILYLRDRLNHLLAHHTGQDVERIARDTDRDNFMSSEDAKAYGLIDHVSTKRP</sequence>
<protein>
    <recommendedName>
        <fullName evidence="1">ATP-dependent Clp protease proteolytic subunit</fullName>
        <ecNumber evidence="1">3.4.21.92</ecNumber>
    </recommendedName>
    <alternativeName>
        <fullName evidence="1">Endopeptidase Clp</fullName>
    </alternativeName>
</protein>
<keyword id="KW-0963">Cytoplasm</keyword>
<keyword id="KW-0378">Hydrolase</keyword>
<keyword id="KW-0645">Protease</keyword>
<keyword id="KW-0720">Serine protease</keyword>
<gene>
    <name evidence="1" type="primary">clpP</name>
    <name type="ordered locus">BURPS1710b_2481</name>
</gene>
<feature type="chain" id="PRO_0000226432" description="ATP-dependent Clp protease proteolytic subunit">
    <location>
        <begin position="1"/>
        <end position="207"/>
    </location>
</feature>
<feature type="active site" description="Nucleophile" evidence="1">
    <location>
        <position position="111"/>
    </location>
</feature>
<feature type="active site" evidence="1">
    <location>
        <position position="136"/>
    </location>
</feature>
<comment type="function">
    <text evidence="1">Cleaves peptides in various proteins in a process that requires ATP hydrolysis. Has a chymotrypsin-like activity. Plays a major role in the degradation of misfolded proteins.</text>
</comment>
<comment type="catalytic activity">
    <reaction evidence="1">
        <text>Hydrolysis of proteins to small peptides in the presence of ATP and magnesium. alpha-casein is the usual test substrate. In the absence of ATP, only oligopeptides shorter than five residues are hydrolyzed (such as succinyl-Leu-Tyr-|-NHMec, and Leu-Tyr-Leu-|-Tyr-Trp, in which cleavage of the -Tyr-|-Leu- and -Tyr-|-Trp bonds also occurs).</text>
        <dbReference type="EC" id="3.4.21.92"/>
    </reaction>
</comment>
<comment type="subunit">
    <text evidence="1">Fourteen ClpP subunits assemble into 2 heptameric rings which stack back to back to give a disk-like structure with a central cavity, resembling the structure of eukaryotic proteasomes.</text>
</comment>
<comment type="subcellular location">
    <subcellularLocation>
        <location evidence="1">Cytoplasm</location>
    </subcellularLocation>
</comment>
<comment type="similarity">
    <text evidence="1">Belongs to the peptidase S14 family.</text>
</comment>